<comment type="function">
    <text evidence="7">Lytic polysaccharide monooxygenase (LPMO) that depolymerizes crystalline and amorphous polysaccharides via the oxidation of scissile alpha- or beta-(1-4)-glycosidic bonds, yielding C1 and C4 oxidation products (PubMed:28919928). Catalysis by LPMOs requires the reduction of the active-site copper from Cu(II) to Cu(I) by a reducing agent and H(2)O(2) or O(2) as a cosubstrate (PubMed:28919928). Active on cellulose and on xyloglucan for deconstruction of plant biomass (PubMed:28919928).</text>
</comment>
<comment type="catalytic activity">
    <reaction evidence="7">
        <text>[(1-&gt;4)-beta-D-glucosyl]n+m + reduced acceptor + O2 = 4-dehydro-beta-D-glucosyl-[(1-&gt;4)-beta-D-glucosyl]n-1 + [(1-&gt;4)-beta-D-glucosyl]m + acceptor + H2O.</text>
        <dbReference type="EC" id="1.14.99.56"/>
    </reaction>
</comment>
<comment type="cofactor">
    <cofactor evidence="2">
        <name>Cu(2+)</name>
        <dbReference type="ChEBI" id="CHEBI:29036"/>
    </cofactor>
    <text evidence="2">Binds 1 copper ion per subunit.</text>
</comment>
<comment type="subcellular location">
    <subcellularLocation>
        <location evidence="7">Secreted</location>
    </subcellularLocation>
</comment>
<comment type="biotechnology">
    <text evidence="1">Lignocellulose is the most abundant polymeric composite on Earth and is a recalcitrant but promising renewable substrate for industrial biotechnology applications. Together with cellobiose dehydrogenases (CDHs) an enzymatic system capable of oxidative cellulose cleavage is formed, which increases the efficiency of cellulases and put LPMOs at focus of biofuel research.</text>
</comment>
<comment type="similarity">
    <text evidence="9">Belongs to the polysaccharide monooxygenase AA9 family.</text>
</comment>
<accession>A0A0J9XL55</accession>
<reference key="1">
    <citation type="submission" date="2014-03" db="EMBL/GenBank/DDBJ databases">
        <authorList>
            <person name="Casaregola S."/>
        </authorList>
    </citation>
    <scope>NUCLEOTIDE SEQUENCE [LARGE SCALE GENOMIC DNA]</scope>
    <source>
        <strain>CLIB 918</strain>
    </source>
</reference>
<reference key="2">
    <citation type="journal article" date="2017" name="Biotechnol. Biofuels">
        <title>The yeast Geotrichum candidum encodes functional lytic polysaccharide monooxygenases.</title>
        <authorList>
            <person name="Ladeveze S."/>
            <person name="Haon M."/>
            <person name="Villares A."/>
            <person name="Cathala B."/>
            <person name="Grisel S."/>
            <person name="Herpoel-Gimbert I."/>
            <person name="Henrissat B."/>
            <person name="Berrin J.G."/>
        </authorList>
    </citation>
    <scope>FUNCTION</scope>
    <scope>CATALYTIC ACTIVITY</scope>
    <scope>SUBCELLULAR LOCATION</scope>
</reference>
<name>LP9B_GEOCN</name>
<sequence>MQLFTSFSLLAVASFASAHGIVTDISSGNDWWTLSNPFRDPYMNPVPDRVGWSFFGAGNGPVPDFTTKDIVCNQFAKPGKLSATIAAGSDLTFYWTVWPESHKGPVLTYLANCNGDCSQVQDPSTLSYFKIDHAGLEDGVWVSDKIIANNNSWTVKIPSDIAPGNYLVRHELLALHSAGQDLGAQFYPVCINFKITGSGNAKPAGVTFPGAYKRTDPGILVNIYNGIKSYIIPGPAPYVEGGSPGNSAEPQPQHTSTAVSTAKTASTSSLTTSVTITSQAPSNTANPPQSITTTTTPKPQSTNINPTSLKTVTTSLRREQLINLCLDDINRQIAAAQPKNGGPVNFSNIEKKREDCYKI</sequence>
<keyword id="KW-0119">Carbohydrate metabolism</keyword>
<keyword id="KW-0136">Cellulose degradation</keyword>
<keyword id="KW-0186">Copper</keyword>
<keyword id="KW-1015">Disulfide bond</keyword>
<keyword id="KW-0325">Glycoprotein</keyword>
<keyword id="KW-0479">Metal-binding</keyword>
<keyword id="KW-0503">Monooxygenase</keyword>
<keyword id="KW-0560">Oxidoreductase</keyword>
<keyword id="KW-0624">Polysaccharide degradation</keyword>
<keyword id="KW-0964">Secreted</keyword>
<keyword id="KW-0732">Signal</keyword>
<gene>
    <name evidence="8" type="primary">LPMO9B</name>
    <name type="ORF">BN980_GECA32s00307g</name>
</gene>
<dbReference type="EC" id="1.14.99.56" evidence="7"/>
<dbReference type="EMBL" id="CCBN010000028">
    <property type="protein sequence ID" value="CDO57961.1"/>
    <property type="molecule type" value="Genomic_DNA"/>
</dbReference>
<dbReference type="SMR" id="A0A0J9XL55"/>
<dbReference type="STRING" id="1173061.A0A0J9XL55"/>
<dbReference type="OrthoDB" id="4090429at2759"/>
<dbReference type="Proteomes" id="UP000242525">
    <property type="component" value="Unassembled WGS sequence"/>
</dbReference>
<dbReference type="GO" id="GO:0005576">
    <property type="term" value="C:extracellular region"/>
    <property type="evidence" value="ECO:0007669"/>
    <property type="project" value="UniProtKB-SubCell"/>
</dbReference>
<dbReference type="GO" id="GO:0046872">
    <property type="term" value="F:metal ion binding"/>
    <property type="evidence" value="ECO:0007669"/>
    <property type="project" value="UniProtKB-KW"/>
</dbReference>
<dbReference type="GO" id="GO:0004497">
    <property type="term" value="F:monooxygenase activity"/>
    <property type="evidence" value="ECO:0007669"/>
    <property type="project" value="UniProtKB-KW"/>
</dbReference>
<dbReference type="GO" id="GO:0030245">
    <property type="term" value="P:cellulose catabolic process"/>
    <property type="evidence" value="ECO:0007669"/>
    <property type="project" value="UniProtKB-KW"/>
</dbReference>
<dbReference type="CDD" id="cd21175">
    <property type="entry name" value="LPMO_AA9"/>
    <property type="match status" value="1"/>
</dbReference>
<dbReference type="Gene3D" id="2.70.50.70">
    <property type="match status" value="1"/>
</dbReference>
<dbReference type="InterPro" id="IPR049892">
    <property type="entry name" value="AA9"/>
</dbReference>
<dbReference type="InterPro" id="IPR005103">
    <property type="entry name" value="AA9_LPMO"/>
</dbReference>
<dbReference type="PANTHER" id="PTHR33353:SF10">
    <property type="entry name" value="ENDO-BETA-1,4-GLUCANASE D"/>
    <property type="match status" value="1"/>
</dbReference>
<dbReference type="PANTHER" id="PTHR33353">
    <property type="entry name" value="PUTATIVE (AFU_ORTHOLOGUE AFUA_1G12560)-RELATED"/>
    <property type="match status" value="1"/>
</dbReference>
<dbReference type="Pfam" id="PF03443">
    <property type="entry name" value="AA9"/>
    <property type="match status" value="1"/>
</dbReference>
<organism>
    <name type="scientific">Geotrichum candidum</name>
    <name type="common">Oospora lactis</name>
    <name type="synonym">Dipodascus geotrichum</name>
    <dbReference type="NCBI Taxonomy" id="1173061"/>
    <lineage>
        <taxon>Eukaryota</taxon>
        <taxon>Fungi</taxon>
        <taxon>Dikarya</taxon>
        <taxon>Ascomycota</taxon>
        <taxon>Saccharomycotina</taxon>
        <taxon>Dipodascomycetes</taxon>
        <taxon>Dipodascales</taxon>
        <taxon>Dipodascaceae</taxon>
        <taxon>Geotrichum</taxon>
    </lineage>
</organism>
<protein>
    <recommendedName>
        <fullName evidence="8">AA9 family lytic polysaccharide monooxygenase B</fullName>
        <shortName evidence="8">LPMO9B</shortName>
        <ecNumber evidence="7">1.14.99.56</ecNumber>
    </recommendedName>
    <alternativeName>
        <fullName evidence="9">Cellulase LPMO9B</fullName>
    </alternativeName>
    <alternativeName>
        <fullName evidence="9">Endo-beta-1,4-glucanase LPMO9B</fullName>
        <shortName evidence="9">Endoglucanase LPMO9B</shortName>
    </alternativeName>
    <alternativeName>
        <fullName evidence="9">Glycosyl hydrolase 61 family protein LPMO9B</fullName>
    </alternativeName>
</protein>
<proteinExistence type="evidence at protein level"/>
<evidence type="ECO:0000250" key="1">
    <source>
        <dbReference type="UniProtKB" id="A0A5J6BJN2"/>
    </source>
</evidence>
<evidence type="ECO:0000250" key="2">
    <source>
        <dbReference type="UniProtKB" id="Q1K8B6"/>
    </source>
</evidence>
<evidence type="ECO:0000250" key="3">
    <source>
        <dbReference type="UniProtKB" id="Q7Z9M7"/>
    </source>
</evidence>
<evidence type="ECO:0000255" key="4"/>
<evidence type="ECO:0000255" key="5">
    <source>
        <dbReference type="PROSITE-ProRule" id="PRU00498"/>
    </source>
</evidence>
<evidence type="ECO:0000256" key="6">
    <source>
        <dbReference type="SAM" id="MobiDB-lite"/>
    </source>
</evidence>
<evidence type="ECO:0000269" key="7">
    <source>
    </source>
</evidence>
<evidence type="ECO:0000303" key="8">
    <source>
    </source>
</evidence>
<evidence type="ECO:0000305" key="9"/>
<feature type="signal peptide" evidence="4">
    <location>
        <begin position="1"/>
        <end position="18"/>
    </location>
</feature>
<feature type="chain" id="PRO_5005325781" description="AA9 family lytic polysaccharide monooxygenase B">
    <location>
        <begin position="19"/>
        <end position="359"/>
    </location>
</feature>
<feature type="region of interest" description="Disordered" evidence="6">
    <location>
        <begin position="241"/>
        <end position="310"/>
    </location>
</feature>
<feature type="compositionally biased region" description="Polar residues" evidence="6">
    <location>
        <begin position="245"/>
        <end position="254"/>
    </location>
</feature>
<feature type="compositionally biased region" description="Low complexity" evidence="6">
    <location>
        <begin position="255"/>
        <end position="304"/>
    </location>
</feature>
<feature type="binding site" evidence="3">
    <location>
        <position position="19"/>
    </location>
    <ligand>
        <name>Cu(2+)</name>
        <dbReference type="ChEBI" id="CHEBI:29036"/>
        <note>catalytic</note>
    </ligand>
</feature>
<feature type="binding site" evidence="3">
    <location>
        <position position="102"/>
    </location>
    <ligand>
        <name>Cu(2+)</name>
        <dbReference type="ChEBI" id="CHEBI:29036"/>
        <note>catalytic</note>
    </ligand>
</feature>
<feature type="binding site" evidence="2">
    <location>
        <position position="176"/>
    </location>
    <ligand>
        <name>O2</name>
        <dbReference type="ChEBI" id="CHEBI:15379"/>
    </ligand>
</feature>
<feature type="binding site" evidence="2">
    <location>
        <position position="185"/>
    </location>
    <ligand>
        <name>O2</name>
        <dbReference type="ChEBI" id="CHEBI:15379"/>
    </ligand>
</feature>
<feature type="binding site" evidence="3">
    <location>
        <position position="187"/>
    </location>
    <ligand>
        <name>Cu(2+)</name>
        <dbReference type="ChEBI" id="CHEBI:29036"/>
        <note>catalytic</note>
    </ligand>
</feature>
<feature type="glycosylation site" description="N-linked (GlcNAc...) asparagine" evidence="5">
    <location>
        <position position="150"/>
    </location>
</feature>
<feature type="glycosylation site" description="N-linked (GlcNAc...) asparagine" evidence="5">
    <location>
        <position position="345"/>
    </location>
</feature>
<feature type="disulfide bond" evidence="1">
    <location>
        <begin position="72"/>
        <end position="190"/>
    </location>
</feature>
<feature type="disulfide bond" evidence="1">
    <location>
        <begin position="113"/>
        <end position="117"/>
    </location>
</feature>